<accession>O29695</accession>
<reference key="1">
    <citation type="journal article" date="1997" name="Nature">
        <title>The complete genome sequence of the hyperthermophilic, sulphate-reducing archaeon Archaeoglobus fulgidus.</title>
        <authorList>
            <person name="Klenk H.-P."/>
            <person name="Clayton R.A."/>
            <person name="Tomb J.-F."/>
            <person name="White O."/>
            <person name="Nelson K.E."/>
            <person name="Ketchum K.A."/>
            <person name="Dodson R.J."/>
            <person name="Gwinn M.L."/>
            <person name="Hickey E.K."/>
            <person name="Peterson J.D."/>
            <person name="Richardson D.L."/>
            <person name="Kerlavage A.R."/>
            <person name="Graham D.E."/>
            <person name="Kyrpides N.C."/>
            <person name="Fleischmann R.D."/>
            <person name="Quackenbush J."/>
            <person name="Lee N.H."/>
            <person name="Sutton G.G."/>
            <person name="Gill S.R."/>
            <person name="Kirkness E.F."/>
            <person name="Dougherty B.A."/>
            <person name="McKenney K."/>
            <person name="Adams M.D."/>
            <person name="Loftus B.J."/>
            <person name="Peterson S.N."/>
            <person name="Reich C.I."/>
            <person name="McNeil L.K."/>
            <person name="Badger J.H."/>
            <person name="Glodek A."/>
            <person name="Zhou L."/>
            <person name="Overbeek R."/>
            <person name="Gocayne J.D."/>
            <person name="Weidman J.F."/>
            <person name="McDonald L.A."/>
            <person name="Utterback T.R."/>
            <person name="Cotton M.D."/>
            <person name="Spriggs T."/>
            <person name="Artiach P."/>
            <person name="Kaine B.P."/>
            <person name="Sykes S.M."/>
            <person name="Sadow P.W."/>
            <person name="D'Andrea K.P."/>
            <person name="Bowman C."/>
            <person name="Fujii C."/>
            <person name="Garland S.A."/>
            <person name="Mason T.M."/>
            <person name="Olsen G.J."/>
            <person name="Fraser C.M."/>
            <person name="Smith H.O."/>
            <person name="Woese C.R."/>
            <person name="Venter J.C."/>
        </authorList>
    </citation>
    <scope>NUCLEOTIDE SEQUENCE [LARGE SCALE GENOMIC DNA]</scope>
    <source>
        <strain>ATCC 49558 / DSM 4304 / JCM 9628 / NBRC 100126 / VC-16</strain>
    </source>
</reference>
<feature type="chain" id="PRO_0000159078" description="Putative sulfur carrier protein AF_0556">
    <location>
        <begin position="1"/>
        <end position="73"/>
    </location>
</feature>
<feature type="active site" description="Cysteine persulfide intermediate" evidence="1">
    <location>
        <position position="11"/>
    </location>
</feature>
<name>Y556_ARCFU</name>
<proteinExistence type="inferred from homology"/>
<comment type="similarity">
    <text evidence="2">Belongs to the sulfur carrier protein TusA family.</text>
</comment>
<dbReference type="EMBL" id="AE000782">
    <property type="protein sequence ID" value="AAB90691.1"/>
    <property type="molecule type" value="Genomic_DNA"/>
</dbReference>
<dbReference type="PIR" id="D69319">
    <property type="entry name" value="D69319"/>
</dbReference>
<dbReference type="RefSeq" id="WP_010878063.1">
    <property type="nucleotide sequence ID" value="NC_000917.1"/>
</dbReference>
<dbReference type="SMR" id="O29695"/>
<dbReference type="STRING" id="224325.AF_0556"/>
<dbReference type="PaxDb" id="224325-AF_0556"/>
<dbReference type="EnsemblBacteria" id="AAB90691">
    <property type="protein sequence ID" value="AAB90691"/>
    <property type="gene ID" value="AF_0556"/>
</dbReference>
<dbReference type="KEGG" id="afu:AF_0556"/>
<dbReference type="eggNOG" id="arCOG02062">
    <property type="taxonomic scope" value="Archaea"/>
</dbReference>
<dbReference type="HOGENOM" id="CLU_165255_1_2_2"/>
<dbReference type="OrthoDB" id="45650at2157"/>
<dbReference type="PhylomeDB" id="O29695"/>
<dbReference type="Proteomes" id="UP000002199">
    <property type="component" value="Chromosome"/>
</dbReference>
<dbReference type="CDD" id="cd00291">
    <property type="entry name" value="SirA_YedF_YeeD"/>
    <property type="match status" value="1"/>
</dbReference>
<dbReference type="Gene3D" id="3.30.110.40">
    <property type="entry name" value="TusA-like domain"/>
    <property type="match status" value="1"/>
</dbReference>
<dbReference type="InterPro" id="IPR001455">
    <property type="entry name" value="TusA-like"/>
</dbReference>
<dbReference type="InterPro" id="IPR036868">
    <property type="entry name" value="TusA-like_sf"/>
</dbReference>
<dbReference type="PANTHER" id="PTHR33279:SF2">
    <property type="entry name" value="SULFUR CARRIER PROTEIN TUSA"/>
    <property type="match status" value="1"/>
</dbReference>
<dbReference type="PANTHER" id="PTHR33279">
    <property type="entry name" value="SULFUR CARRIER PROTEIN YEDF-RELATED"/>
    <property type="match status" value="1"/>
</dbReference>
<dbReference type="Pfam" id="PF01206">
    <property type="entry name" value="TusA"/>
    <property type="match status" value="1"/>
</dbReference>
<dbReference type="SUPFAM" id="SSF64307">
    <property type="entry name" value="SirA-like"/>
    <property type="match status" value="1"/>
</dbReference>
<dbReference type="PROSITE" id="PS01148">
    <property type="entry name" value="UPF0033"/>
    <property type="match status" value="1"/>
</dbReference>
<sequence length="73" mass="8288">MVVVDARGSYCPGPLMEMIKTLKQVEVGEVVEVLSSDESSAKDIPEWVKKAGHELVEVKKEEDYWRIVVKKLK</sequence>
<keyword id="KW-1185">Reference proteome</keyword>
<evidence type="ECO:0000250" key="1">
    <source>
        <dbReference type="UniProtKB" id="P0A890"/>
    </source>
</evidence>
<evidence type="ECO:0000305" key="2"/>
<protein>
    <recommendedName>
        <fullName>Putative sulfur carrier protein AF_0556</fullName>
    </recommendedName>
</protein>
<gene>
    <name type="ordered locus">AF_0556</name>
</gene>
<organism>
    <name type="scientific">Archaeoglobus fulgidus (strain ATCC 49558 / DSM 4304 / JCM 9628 / NBRC 100126 / VC-16)</name>
    <dbReference type="NCBI Taxonomy" id="224325"/>
    <lineage>
        <taxon>Archaea</taxon>
        <taxon>Methanobacteriati</taxon>
        <taxon>Methanobacteriota</taxon>
        <taxon>Archaeoglobi</taxon>
        <taxon>Archaeoglobales</taxon>
        <taxon>Archaeoglobaceae</taxon>
        <taxon>Archaeoglobus</taxon>
    </lineage>
</organism>